<dbReference type="EC" id="2.3.1.259" evidence="1"/>
<dbReference type="EC" id="2.3.1.48" evidence="1"/>
<dbReference type="EMBL" id="AK004750">
    <property type="protein sequence ID" value="BAB23531.1"/>
    <property type="molecule type" value="mRNA"/>
</dbReference>
<dbReference type="EMBL" id="AK088736">
    <property type="protein sequence ID" value="BAC40538.1"/>
    <property type="molecule type" value="mRNA"/>
</dbReference>
<dbReference type="EMBL" id="BC004837">
    <property type="protein sequence ID" value="AAH04837.1"/>
    <property type="molecule type" value="mRNA"/>
</dbReference>
<dbReference type="CCDS" id="CCDS37239.1"/>
<dbReference type="RefSeq" id="NP_001277618.1">
    <property type="nucleotide sequence ID" value="NM_001290689.1"/>
</dbReference>
<dbReference type="RefSeq" id="NP_083366.1">
    <property type="nucleotide sequence ID" value="NM_029090.3"/>
</dbReference>
<dbReference type="RefSeq" id="XP_006522742.1">
    <property type="nucleotide sequence ID" value="XM_006522679.3"/>
</dbReference>
<dbReference type="RefSeq" id="XP_006522743.1">
    <property type="nucleotide sequence ID" value="XM_006522680.4"/>
</dbReference>
<dbReference type="SMR" id="Q9DBU2"/>
<dbReference type="FunCoup" id="Q9DBU2">
    <property type="interactions" value="1776"/>
</dbReference>
<dbReference type="STRING" id="10090.ENSMUSP00000140031"/>
<dbReference type="iPTMnet" id="Q9DBU2"/>
<dbReference type="PhosphoSitePlus" id="Q9DBU2"/>
<dbReference type="PaxDb" id="10090-ENSMUSP00000140031"/>
<dbReference type="ProteomicsDB" id="287555"/>
<dbReference type="Pumba" id="Q9DBU2"/>
<dbReference type="Antibodypedia" id="24137">
    <property type="antibodies" value="148 antibodies from 19 providers"/>
</dbReference>
<dbReference type="DNASU" id="74763"/>
<dbReference type="Ensembl" id="ENSMUST00000115860.8">
    <property type="protein sequence ID" value="ENSMUSP00000111526.2"/>
    <property type="gene ID" value="ENSMUSG00000005982.15"/>
</dbReference>
<dbReference type="Ensembl" id="ENSMUST00000150655.3">
    <property type="protein sequence ID" value="ENSMUSP00000135206.2"/>
    <property type="gene ID" value="ENSMUSG00000005982.15"/>
</dbReference>
<dbReference type="Ensembl" id="ENSMUST00000186375.8">
    <property type="protein sequence ID" value="ENSMUSP00000140031.2"/>
    <property type="gene ID" value="ENSMUSG00000005982.15"/>
</dbReference>
<dbReference type="GeneID" id="74763"/>
<dbReference type="KEGG" id="mmu:74763"/>
<dbReference type="UCSC" id="uc007xyw.1">
    <property type="organism name" value="mouse"/>
</dbReference>
<dbReference type="AGR" id="MGI:1922013"/>
<dbReference type="CTD" id="79903"/>
<dbReference type="MGI" id="MGI:1922013">
    <property type="gene designation" value="Naa60"/>
</dbReference>
<dbReference type="VEuPathDB" id="HostDB:ENSMUSG00000005982"/>
<dbReference type="eggNOG" id="KOG3138">
    <property type="taxonomic scope" value="Eukaryota"/>
</dbReference>
<dbReference type="GeneTree" id="ENSGT00390000008314"/>
<dbReference type="InParanoid" id="Q9DBU2"/>
<dbReference type="OMA" id="IHFYKKM"/>
<dbReference type="OrthoDB" id="47017at2759"/>
<dbReference type="PhylomeDB" id="Q9DBU2"/>
<dbReference type="TreeFam" id="TF323980"/>
<dbReference type="BioGRID-ORCS" id="74763">
    <property type="hits" value="4 hits in 78 CRISPR screens"/>
</dbReference>
<dbReference type="ChiTaRS" id="Naa60">
    <property type="organism name" value="mouse"/>
</dbReference>
<dbReference type="PRO" id="PR:Q9DBU2"/>
<dbReference type="Proteomes" id="UP000000589">
    <property type="component" value="Chromosome 16"/>
</dbReference>
<dbReference type="RNAct" id="Q9DBU2">
    <property type="molecule type" value="protein"/>
</dbReference>
<dbReference type="Bgee" id="ENSMUSG00000005982">
    <property type="expression patterns" value="Expressed in ankle joint and 266 other cell types or tissues"/>
</dbReference>
<dbReference type="ExpressionAtlas" id="Q9DBU2">
    <property type="expression patterns" value="baseline and differential"/>
</dbReference>
<dbReference type="GO" id="GO:0000139">
    <property type="term" value="C:Golgi membrane"/>
    <property type="evidence" value="ECO:0000250"/>
    <property type="project" value="UniProtKB"/>
</dbReference>
<dbReference type="GO" id="GO:0010485">
    <property type="term" value="F:histone H4 acetyltransferase activity"/>
    <property type="evidence" value="ECO:0000250"/>
    <property type="project" value="UniProtKB"/>
</dbReference>
<dbReference type="GO" id="GO:0042803">
    <property type="term" value="F:protein homodimerization activity"/>
    <property type="evidence" value="ECO:0000250"/>
    <property type="project" value="UniProtKB"/>
</dbReference>
<dbReference type="GO" id="GO:0120518">
    <property type="term" value="F:protein N-terminal-methionine acetyltransferase activity"/>
    <property type="evidence" value="ECO:0007669"/>
    <property type="project" value="UniProtKB-EC"/>
</dbReference>
<dbReference type="GO" id="GO:0004596">
    <property type="term" value="F:protein-N-terminal amino-acid acetyltransferase activity"/>
    <property type="evidence" value="ECO:0000250"/>
    <property type="project" value="UniProtKB"/>
</dbReference>
<dbReference type="GO" id="GO:0008283">
    <property type="term" value="P:cell population proliferation"/>
    <property type="evidence" value="ECO:0000250"/>
    <property type="project" value="UniProtKB"/>
</dbReference>
<dbReference type="GO" id="GO:0007059">
    <property type="term" value="P:chromosome segregation"/>
    <property type="evidence" value="ECO:0000250"/>
    <property type="project" value="UniProtKB"/>
</dbReference>
<dbReference type="GO" id="GO:0017196">
    <property type="term" value="P:N-terminal peptidyl-methionine acetylation"/>
    <property type="evidence" value="ECO:0000250"/>
    <property type="project" value="UniProtKB"/>
</dbReference>
<dbReference type="GO" id="GO:0006474">
    <property type="term" value="P:N-terminal protein amino acid acetylation"/>
    <property type="evidence" value="ECO:0000250"/>
    <property type="project" value="UniProtKB"/>
</dbReference>
<dbReference type="GO" id="GO:0006334">
    <property type="term" value="P:nucleosome assembly"/>
    <property type="evidence" value="ECO:0000250"/>
    <property type="project" value="UniProtKB"/>
</dbReference>
<dbReference type="CDD" id="cd04301">
    <property type="entry name" value="NAT_SF"/>
    <property type="match status" value="1"/>
</dbReference>
<dbReference type="FunFam" id="3.40.630.30:FF:000028">
    <property type="entry name" value="N-alpha-acetyltransferase 60 isoform X1"/>
    <property type="match status" value="1"/>
</dbReference>
<dbReference type="Gene3D" id="3.40.630.30">
    <property type="match status" value="1"/>
</dbReference>
<dbReference type="InterPro" id="IPR016181">
    <property type="entry name" value="Acyl_CoA_acyltransferase"/>
</dbReference>
<dbReference type="InterPro" id="IPR000182">
    <property type="entry name" value="GNAT_dom"/>
</dbReference>
<dbReference type="InterPro" id="IPR045141">
    <property type="entry name" value="NAA60-like"/>
</dbReference>
<dbReference type="PANTHER" id="PTHR14744">
    <property type="entry name" value="N-ALPHA-ACETYLTRANSFERASE 60"/>
    <property type="match status" value="1"/>
</dbReference>
<dbReference type="PANTHER" id="PTHR14744:SF15">
    <property type="entry name" value="N-ALPHA-ACETYLTRANSFERASE 60"/>
    <property type="match status" value="1"/>
</dbReference>
<dbReference type="Pfam" id="PF00583">
    <property type="entry name" value="Acetyltransf_1"/>
    <property type="match status" value="1"/>
</dbReference>
<dbReference type="SUPFAM" id="SSF55729">
    <property type="entry name" value="Acyl-CoA N-acyltransferases (Nat)"/>
    <property type="match status" value="1"/>
</dbReference>
<dbReference type="PROSITE" id="PS51186">
    <property type="entry name" value="GNAT"/>
    <property type="match status" value="1"/>
</dbReference>
<name>NAA60_MOUSE</name>
<organism>
    <name type="scientific">Mus musculus</name>
    <name type="common">Mouse</name>
    <dbReference type="NCBI Taxonomy" id="10090"/>
    <lineage>
        <taxon>Eukaryota</taxon>
        <taxon>Metazoa</taxon>
        <taxon>Chordata</taxon>
        <taxon>Craniata</taxon>
        <taxon>Vertebrata</taxon>
        <taxon>Euteleostomi</taxon>
        <taxon>Mammalia</taxon>
        <taxon>Eutheria</taxon>
        <taxon>Euarchontoglires</taxon>
        <taxon>Glires</taxon>
        <taxon>Rodentia</taxon>
        <taxon>Myomorpha</taxon>
        <taxon>Muroidea</taxon>
        <taxon>Muridae</taxon>
        <taxon>Murinae</taxon>
        <taxon>Mus</taxon>
        <taxon>Mus</taxon>
    </lineage>
</organism>
<protein>
    <recommendedName>
        <fullName>N-alpha-acetyltransferase 60</fullName>
        <ecNumber evidence="1">2.3.1.259</ecNumber>
    </recommendedName>
    <alternativeName>
        <fullName evidence="1">Histone acetyltransferase type B protein 4</fullName>
        <shortName evidence="1">HAT4</shortName>
        <ecNumber evidence="1">2.3.1.48</ecNumber>
    </alternativeName>
    <alternativeName>
        <fullName>N-acetyltransferase 15</fullName>
    </alternativeName>
    <alternativeName>
        <fullName>N-alpha-acetyltransferase F</fullName>
        <shortName>NatF</shortName>
    </alternativeName>
</protein>
<sequence>MTEVVPSSALSEVSLRLLCHDDIDTVKHLCGDWFPIEYPDSWYRDITSNKKFFSLAATYRGAIVGMIVAEIKNRTKIHKEDGDILASSFSVDTQVAYILSLGVVKEFRKHGIGSLLLESLKDHISTTAQDHCKAIYLHVLTTNNTAINFYENRDFRQHHYLPYYYSIRGVLKDGFTYVLYINGGHPPWTILDYIQHLGSALANLSPCSIPHRIYRQAHSLLCSFLPWSSISTKGGIEYSRTM</sequence>
<proteinExistence type="evidence at transcript level"/>
<comment type="function">
    <text evidence="1">N-alpha-acetyltransferase that specifically mediates the acetylation of N-terminal residues of the transmembrane proteins, with a strong preference for N-termini facing the cytosol. Displays N-terminal acetyltransferase activity towards a range of N-terminal sequences including those starting with Met-Lys, Met-Val, Met-Ala and Met-Met. Required for normal chromosomal segregation during anaphase. May also show histone acetyltransferase activity; such results are however unclear in vivo and would require additional experimental evidences.</text>
</comment>
<comment type="catalytic activity">
    <reaction evidence="1">
        <text>N-terminal L-methionyl-[transmembrane protein] + acetyl-CoA = N-terminal N(alpha)-acetyl-L-methionyl-[transmembrane protein] + CoA + H(+)</text>
        <dbReference type="Rhea" id="RHEA:50604"/>
        <dbReference type="Rhea" id="RHEA-COMP:12745"/>
        <dbReference type="Rhea" id="RHEA-COMP:12746"/>
        <dbReference type="ChEBI" id="CHEBI:15378"/>
        <dbReference type="ChEBI" id="CHEBI:57287"/>
        <dbReference type="ChEBI" id="CHEBI:57288"/>
        <dbReference type="ChEBI" id="CHEBI:64731"/>
        <dbReference type="ChEBI" id="CHEBI:133414"/>
        <dbReference type="EC" id="2.3.1.259"/>
    </reaction>
</comment>
<comment type="catalytic activity">
    <reaction evidence="1">
        <text>L-lysyl-[protein] + acetyl-CoA = N(6)-acetyl-L-lysyl-[protein] + CoA + H(+)</text>
        <dbReference type="Rhea" id="RHEA:45948"/>
        <dbReference type="Rhea" id="RHEA-COMP:9752"/>
        <dbReference type="Rhea" id="RHEA-COMP:10731"/>
        <dbReference type="ChEBI" id="CHEBI:15378"/>
        <dbReference type="ChEBI" id="CHEBI:29969"/>
        <dbReference type="ChEBI" id="CHEBI:57287"/>
        <dbReference type="ChEBI" id="CHEBI:57288"/>
        <dbReference type="ChEBI" id="CHEBI:61930"/>
        <dbReference type="EC" id="2.3.1.48"/>
    </reaction>
</comment>
<comment type="subunit">
    <text evidence="1">Monomer and homodimer; monomer in presence of substrate and homodimer in its absence.</text>
</comment>
<comment type="subcellular location">
    <subcellularLocation>
        <location evidence="1">Golgi apparatus membrane</location>
        <topology evidence="1">Peripheral membrane protein</topology>
        <orientation evidence="1">Cytoplasmic side</orientation>
    </subcellularLocation>
    <text evidence="1">Probably forms a intramembrane hairpin-like structure in the membrane.</text>
</comment>
<comment type="PTM">
    <text evidence="1">Acetylated: autoacetylation is required for optimal acetyltransferase activity.</text>
</comment>
<comment type="similarity">
    <text evidence="3">Belongs to the acetyltransferase family. NAA60 subfamily.</text>
</comment>
<evidence type="ECO:0000250" key="1">
    <source>
        <dbReference type="UniProtKB" id="Q9H7X0"/>
    </source>
</evidence>
<evidence type="ECO:0000255" key="2">
    <source>
        <dbReference type="PROSITE-ProRule" id="PRU00532"/>
    </source>
</evidence>
<evidence type="ECO:0000305" key="3"/>
<keyword id="KW-0007">Acetylation</keyword>
<keyword id="KW-0012">Acyltransferase</keyword>
<keyword id="KW-0156">Chromatin regulator</keyword>
<keyword id="KW-0159">Chromosome partition</keyword>
<keyword id="KW-0333">Golgi apparatus</keyword>
<keyword id="KW-0472">Membrane</keyword>
<keyword id="KW-1185">Reference proteome</keyword>
<keyword id="KW-0808">Transferase</keyword>
<reference key="1">
    <citation type="journal article" date="2005" name="Science">
        <title>The transcriptional landscape of the mammalian genome.</title>
        <authorList>
            <person name="Carninci P."/>
            <person name="Kasukawa T."/>
            <person name="Katayama S."/>
            <person name="Gough J."/>
            <person name="Frith M.C."/>
            <person name="Maeda N."/>
            <person name="Oyama R."/>
            <person name="Ravasi T."/>
            <person name="Lenhard B."/>
            <person name="Wells C."/>
            <person name="Kodzius R."/>
            <person name="Shimokawa K."/>
            <person name="Bajic V.B."/>
            <person name="Brenner S.E."/>
            <person name="Batalov S."/>
            <person name="Forrest A.R."/>
            <person name="Zavolan M."/>
            <person name="Davis M.J."/>
            <person name="Wilming L.G."/>
            <person name="Aidinis V."/>
            <person name="Allen J.E."/>
            <person name="Ambesi-Impiombato A."/>
            <person name="Apweiler R."/>
            <person name="Aturaliya R.N."/>
            <person name="Bailey T.L."/>
            <person name="Bansal M."/>
            <person name="Baxter L."/>
            <person name="Beisel K.W."/>
            <person name="Bersano T."/>
            <person name="Bono H."/>
            <person name="Chalk A.M."/>
            <person name="Chiu K.P."/>
            <person name="Choudhary V."/>
            <person name="Christoffels A."/>
            <person name="Clutterbuck D.R."/>
            <person name="Crowe M.L."/>
            <person name="Dalla E."/>
            <person name="Dalrymple B.P."/>
            <person name="de Bono B."/>
            <person name="Della Gatta G."/>
            <person name="di Bernardo D."/>
            <person name="Down T."/>
            <person name="Engstrom P."/>
            <person name="Fagiolini M."/>
            <person name="Faulkner G."/>
            <person name="Fletcher C.F."/>
            <person name="Fukushima T."/>
            <person name="Furuno M."/>
            <person name="Futaki S."/>
            <person name="Gariboldi M."/>
            <person name="Georgii-Hemming P."/>
            <person name="Gingeras T.R."/>
            <person name="Gojobori T."/>
            <person name="Green R.E."/>
            <person name="Gustincich S."/>
            <person name="Harbers M."/>
            <person name="Hayashi Y."/>
            <person name="Hensch T.K."/>
            <person name="Hirokawa N."/>
            <person name="Hill D."/>
            <person name="Huminiecki L."/>
            <person name="Iacono M."/>
            <person name="Ikeo K."/>
            <person name="Iwama A."/>
            <person name="Ishikawa T."/>
            <person name="Jakt M."/>
            <person name="Kanapin A."/>
            <person name="Katoh M."/>
            <person name="Kawasawa Y."/>
            <person name="Kelso J."/>
            <person name="Kitamura H."/>
            <person name="Kitano H."/>
            <person name="Kollias G."/>
            <person name="Krishnan S.P."/>
            <person name="Kruger A."/>
            <person name="Kummerfeld S.K."/>
            <person name="Kurochkin I.V."/>
            <person name="Lareau L.F."/>
            <person name="Lazarevic D."/>
            <person name="Lipovich L."/>
            <person name="Liu J."/>
            <person name="Liuni S."/>
            <person name="McWilliam S."/>
            <person name="Madan Babu M."/>
            <person name="Madera M."/>
            <person name="Marchionni L."/>
            <person name="Matsuda H."/>
            <person name="Matsuzawa S."/>
            <person name="Miki H."/>
            <person name="Mignone F."/>
            <person name="Miyake S."/>
            <person name="Morris K."/>
            <person name="Mottagui-Tabar S."/>
            <person name="Mulder N."/>
            <person name="Nakano N."/>
            <person name="Nakauchi H."/>
            <person name="Ng P."/>
            <person name="Nilsson R."/>
            <person name="Nishiguchi S."/>
            <person name="Nishikawa S."/>
            <person name="Nori F."/>
            <person name="Ohara O."/>
            <person name="Okazaki Y."/>
            <person name="Orlando V."/>
            <person name="Pang K.C."/>
            <person name="Pavan W.J."/>
            <person name="Pavesi G."/>
            <person name="Pesole G."/>
            <person name="Petrovsky N."/>
            <person name="Piazza S."/>
            <person name="Reed J."/>
            <person name="Reid J.F."/>
            <person name="Ring B.Z."/>
            <person name="Ringwald M."/>
            <person name="Rost B."/>
            <person name="Ruan Y."/>
            <person name="Salzberg S.L."/>
            <person name="Sandelin A."/>
            <person name="Schneider C."/>
            <person name="Schoenbach C."/>
            <person name="Sekiguchi K."/>
            <person name="Semple C.A."/>
            <person name="Seno S."/>
            <person name="Sessa L."/>
            <person name="Sheng Y."/>
            <person name="Shibata Y."/>
            <person name="Shimada H."/>
            <person name="Shimada K."/>
            <person name="Silva D."/>
            <person name="Sinclair B."/>
            <person name="Sperling S."/>
            <person name="Stupka E."/>
            <person name="Sugiura K."/>
            <person name="Sultana R."/>
            <person name="Takenaka Y."/>
            <person name="Taki K."/>
            <person name="Tammoja K."/>
            <person name="Tan S.L."/>
            <person name="Tang S."/>
            <person name="Taylor M.S."/>
            <person name="Tegner J."/>
            <person name="Teichmann S.A."/>
            <person name="Ueda H.R."/>
            <person name="van Nimwegen E."/>
            <person name="Verardo R."/>
            <person name="Wei C.L."/>
            <person name="Yagi K."/>
            <person name="Yamanishi H."/>
            <person name="Zabarovsky E."/>
            <person name="Zhu S."/>
            <person name="Zimmer A."/>
            <person name="Hide W."/>
            <person name="Bult C."/>
            <person name="Grimmond S.M."/>
            <person name="Teasdale R.D."/>
            <person name="Liu E.T."/>
            <person name="Brusic V."/>
            <person name="Quackenbush J."/>
            <person name="Wahlestedt C."/>
            <person name="Mattick J.S."/>
            <person name="Hume D.A."/>
            <person name="Kai C."/>
            <person name="Sasaki D."/>
            <person name="Tomaru Y."/>
            <person name="Fukuda S."/>
            <person name="Kanamori-Katayama M."/>
            <person name="Suzuki M."/>
            <person name="Aoki J."/>
            <person name="Arakawa T."/>
            <person name="Iida J."/>
            <person name="Imamura K."/>
            <person name="Itoh M."/>
            <person name="Kato T."/>
            <person name="Kawaji H."/>
            <person name="Kawagashira N."/>
            <person name="Kawashima T."/>
            <person name="Kojima M."/>
            <person name="Kondo S."/>
            <person name="Konno H."/>
            <person name="Nakano K."/>
            <person name="Ninomiya N."/>
            <person name="Nishio T."/>
            <person name="Okada M."/>
            <person name="Plessy C."/>
            <person name="Shibata K."/>
            <person name="Shiraki T."/>
            <person name="Suzuki S."/>
            <person name="Tagami M."/>
            <person name="Waki K."/>
            <person name="Watahiki A."/>
            <person name="Okamura-Oho Y."/>
            <person name="Suzuki H."/>
            <person name="Kawai J."/>
            <person name="Hayashizaki Y."/>
        </authorList>
    </citation>
    <scope>NUCLEOTIDE SEQUENCE [LARGE SCALE MRNA]</scope>
    <source>
        <strain>C57BL/6J</strain>
        <strain>NOD</strain>
        <tissue>Lung</tissue>
        <tissue>Thymus</tissue>
    </source>
</reference>
<reference key="2">
    <citation type="journal article" date="2004" name="Genome Res.">
        <title>The status, quality, and expansion of the NIH full-length cDNA project: the Mammalian Gene Collection (MGC).</title>
        <authorList>
            <consortium name="The MGC Project Team"/>
        </authorList>
    </citation>
    <scope>NUCLEOTIDE SEQUENCE [LARGE SCALE MRNA]</scope>
    <source>
        <strain>NMRI</strain>
        <tissue>Mammary tumor</tissue>
    </source>
</reference>
<accession>Q9DBU2</accession>
<gene>
    <name type="primary">Naa60</name>
    <name type="synonym">Nat15</name>
</gene>
<feature type="chain" id="PRO_0000321567" description="N-alpha-acetyltransferase 60">
    <location>
        <begin position="1"/>
        <end position="242"/>
    </location>
</feature>
<feature type="topological domain" description="Cytoplasmic" evidence="1">
    <location>
        <begin position="1"/>
        <end position="192"/>
    </location>
</feature>
<feature type="intramembrane region" description="Helical" evidence="1">
    <location>
        <begin position="193"/>
        <end position="236"/>
    </location>
</feature>
<feature type="topological domain" description="Cytoplasmic" evidence="1">
    <location>
        <begin position="237"/>
        <end position="242"/>
    </location>
</feature>
<feature type="domain" description="N-acetyltransferase" evidence="2">
    <location>
        <begin position="13"/>
        <end position="182"/>
    </location>
</feature>
<feature type="region of interest" description="Required for homodimerization" evidence="1">
    <location>
        <begin position="162"/>
        <end position="173"/>
    </location>
</feature>
<feature type="active site" evidence="1">
    <location>
        <position position="97"/>
    </location>
</feature>
<feature type="active site" evidence="1">
    <location>
        <position position="138"/>
    </location>
</feature>
<feature type="binding site" evidence="1">
    <location>
        <position position="38"/>
    </location>
    <ligand>
        <name>substrate</name>
    </ligand>
</feature>
<feature type="binding site" evidence="1">
    <location>
        <position position="99"/>
    </location>
    <ligand>
        <name>substrate</name>
    </ligand>
</feature>
<feature type="binding site" evidence="1">
    <location>
        <begin position="101"/>
        <end position="103"/>
    </location>
    <ligand>
        <name>acetyl-CoA</name>
        <dbReference type="ChEBI" id="CHEBI:57288"/>
    </ligand>
</feature>
<feature type="binding site" evidence="1">
    <location>
        <begin position="109"/>
        <end position="114"/>
    </location>
    <ligand>
        <name>acetyl-CoA</name>
        <dbReference type="ChEBI" id="CHEBI:57288"/>
    </ligand>
</feature>
<feature type="binding site" evidence="1">
    <location>
        <position position="143"/>
    </location>
    <ligand>
        <name>acetyl-CoA</name>
        <dbReference type="ChEBI" id="CHEBI:57288"/>
    </ligand>
</feature>
<feature type="binding site" evidence="1">
    <location>
        <begin position="150"/>
        <end position="153"/>
    </location>
    <ligand>
        <name>acetyl-CoA</name>
        <dbReference type="ChEBI" id="CHEBI:57288"/>
    </ligand>
</feature>
<feature type="binding site" evidence="1">
    <location>
        <position position="165"/>
    </location>
    <ligand>
        <name>substrate</name>
    </ligand>
</feature>
<feature type="modified residue" description="N6-acetyllysine; by autocatalysis" evidence="1">
    <location>
        <position position="79"/>
    </location>
</feature>
<feature type="modified residue" description="N6-acetyllysine; by autocatalysis" evidence="1">
    <location>
        <position position="105"/>
    </location>
</feature>
<feature type="modified residue" description="N6-acetyllysine; by autocatalysis" evidence="1">
    <location>
        <position position="109"/>
    </location>
</feature>
<feature type="modified residue" description="N6-acetyllysine; by autocatalysis" evidence="1">
    <location>
        <position position="121"/>
    </location>
</feature>